<organism>
    <name type="scientific">Solanum lycopersicum</name>
    <name type="common">Tomato</name>
    <name type="synonym">Lycopersicon esculentum</name>
    <dbReference type="NCBI Taxonomy" id="4081"/>
    <lineage>
        <taxon>Eukaryota</taxon>
        <taxon>Viridiplantae</taxon>
        <taxon>Streptophyta</taxon>
        <taxon>Embryophyta</taxon>
        <taxon>Tracheophyta</taxon>
        <taxon>Spermatophyta</taxon>
        <taxon>Magnoliopsida</taxon>
        <taxon>eudicotyledons</taxon>
        <taxon>Gunneridae</taxon>
        <taxon>Pentapetalae</taxon>
        <taxon>asterids</taxon>
        <taxon>lamiids</taxon>
        <taxon>Solanales</taxon>
        <taxon>Solanaceae</taxon>
        <taxon>Solanoideae</taxon>
        <taxon>Solaneae</taxon>
        <taxon>Solanum</taxon>
        <taxon>Solanum subgen. Lycopersicon</taxon>
    </lineage>
</organism>
<reference key="1">
    <citation type="journal article" date="1985" name="J. Biol. Chem.">
        <title>Wound-induced proteinase inhibitors from tomato leaves. I. The cDNA-deduced primary structure of pre-inhibitor I and its post-translational processing.</title>
        <authorList>
            <person name="Graham J.S."/>
            <person name="Pearce G."/>
            <person name="Merryweather J."/>
            <person name="Titani K."/>
            <person name="Ericsson L."/>
            <person name="Ryan C.A."/>
        </authorList>
    </citation>
    <scope>NUCLEOTIDE SEQUENCE [MRNA]</scope>
</reference>
<reference key="2">
    <citation type="journal article" date="1986" name="Proc. Natl. Acad. Sci. U.S.A.">
        <title>Molecular characterization and phylogenetic studies of a wound-inducible proteinase inhibitor I gene in Lycopersicon species.</title>
        <authorList>
            <person name="Lee J.S."/>
            <person name="Brown W.E."/>
            <person name="Graham J.S."/>
            <person name="Pearce G."/>
            <person name="Fox E.A."/>
            <person name="Dreher T.W."/>
            <person name="Ahern K.G."/>
            <person name="Pearson G.D."/>
            <person name="Ryan C.A."/>
        </authorList>
    </citation>
    <scope>NUCLEOTIDE SEQUENCE [GENOMIC DNA]</scope>
    <source>
        <strain>cv. Bonny Best</strain>
        <tissue>Leaf</tissue>
    </source>
</reference>
<accession>P05118</accession>
<evidence type="ECO:0000250" key="1"/>
<evidence type="ECO:0000255" key="2"/>
<evidence type="ECO:0000305" key="3"/>
<feature type="signal peptide" evidence="2">
    <location>
        <begin position="1"/>
        <end position="23"/>
    </location>
</feature>
<feature type="propeptide" id="PRO_0000025298">
    <location>
        <begin position="24"/>
        <end position="36"/>
    </location>
</feature>
<feature type="chain" id="PRO_0000025299" description="Wound-induced proteinase inhibitor 1">
    <location>
        <begin position="37"/>
        <end position="111"/>
    </location>
</feature>
<feature type="site" description="Reactive bond" evidence="1">
    <location>
        <begin position="87"/>
        <end position="88"/>
    </location>
</feature>
<name>ICI1_SOLLC</name>
<proteinExistence type="evidence at transcript level"/>
<protein>
    <recommendedName>
        <fullName>Wound-induced proteinase inhibitor 1</fullName>
    </recommendedName>
    <alternativeName>
        <fullName>Wound-induced proteinase inhibitor I</fullName>
    </alternativeName>
</protein>
<sequence>MESKFAHIIVFFLLATSFETLMARKEIDGPEVIELLKEFDSNLMCEGKQMWPELIGVPTKLAKEIIEKENPSITNIPILLSGSPITLDYLCDRVRLFDNILGFVVQMPVVT</sequence>
<comment type="subcellular location">
    <subcellularLocation>
        <location>Secreted</location>
    </subcellularLocation>
</comment>
<comment type="induction">
    <text>By wounding.</text>
</comment>
<comment type="similarity">
    <text evidence="3">Belongs to the protease inhibitor I13 (potato type I serine protease inhibitor) family.</text>
</comment>
<dbReference type="EMBL" id="K03290">
    <property type="protein sequence ID" value="AAA34199.1"/>
    <property type="molecule type" value="mRNA"/>
</dbReference>
<dbReference type="EMBL" id="M13938">
    <property type="protein sequence ID" value="AAA34200.1"/>
    <property type="molecule type" value="Genomic_DNA"/>
</dbReference>
<dbReference type="PIR" id="A25046">
    <property type="entry name" value="A24048"/>
</dbReference>
<dbReference type="RefSeq" id="NP_001295870.1">
    <property type="nucleotide sequence ID" value="NM_001308941.1"/>
</dbReference>
<dbReference type="SMR" id="P05118"/>
<dbReference type="FunCoup" id="P05118">
    <property type="interactions" value="25"/>
</dbReference>
<dbReference type="STRING" id="4081.P05118"/>
<dbReference type="MEROPS" id="I13.002"/>
<dbReference type="MEROPS" id="I13.010"/>
<dbReference type="PaxDb" id="4081-Solyc09g084470.2.1"/>
<dbReference type="GeneID" id="543954"/>
<dbReference type="KEGG" id="sly:543954"/>
<dbReference type="eggNOG" id="ENOG502SU6V">
    <property type="taxonomic scope" value="Eukaryota"/>
</dbReference>
<dbReference type="HOGENOM" id="CLU_158942_4_1_1"/>
<dbReference type="InParanoid" id="P05118"/>
<dbReference type="OrthoDB" id="10013825at2759"/>
<dbReference type="PhylomeDB" id="P05118"/>
<dbReference type="Proteomes" id="UP000004994">
    <property type="component" value="Unplaced"/>
</dbReference>
<dbReference type="ExpressionAtlas" id="P05118">
    <property type="expression patterns" value="baseline and differential"/>
</dbReference>
<dbReference type="GO" id="GO:0005576">
    <property type="term" value="C:extracellular region"/>
    <property type="evidence" value="ECO:0007669"/>
    <property type="project" value="UniProtKB-SubCell"/>
</dbReference>
<dbReference type="GO" id="GO:0004867">
    <property type="term" value="F:serine-type endopeptidase inhibitor activity"/>
    <property type="evidence" value="ECO:0007669"/>
    <property type="project" value="UniProtKB-KW"/>
</dbReference>
<dbReference type="GO" id="GO:0009611">
    <property type="term" value="P:response to wounding"/>
    <property type="evidence" value="ECO:0007669"/>
    <property type="project" value="InterPro"/>
</dbReference>
<dbReference type="Gene3D" id="3.30.10.10">
    <property type="entry name" value="Trypsin Inhibitor V, subunit A"/>
    <property type="match status" value="1"/>
</dbReference>
<dbReference type="InterPro" id="IPR000864">
    <property type="entry name" value="Prot_inh_pot1"/>
</dbReference>
<dbReference type="InterPro" id="IPR036354">
    <property type="entry name" value="Prot_inh_pot1_sf"/>
</dbReference>
<dbReference type="PANTHER" id="PTHR33091">
    <property type="entry name" value="PROTEIN, PUTATIVE, EXPRESSED-RELATED"/>
    <property type="match status" value="1"/>
</dbReference>
<dbReference type="PANTHER" id="PTHR33091:SF65">
    <property type="entry name" value="WOUND-INDUCED PROTEINASE INHIBITOR 1"/>
    <property type="match status" value="1"/>
</dbReference>
<dbReference type="Pfam" id="PF00280">
    <property type="entry name" value="potato_inhibit"/>
    <property type="match status" value="1"/>
</dbReference>
<dbReference type="PRINTS" id="PR00292">
    <property type="entry name" value="POTATOINHBTR"/>
</dbReference>
<dbReference type="SUPFAM" id="SSF54654">
    <property type="entry name" value="CI-2 family of serine protease inhibitors"/>
    <property type="match status" value="1"/>
</dbReference>
<dbReference type="PROSITE" id="PS00285">
    <property type="entry name" value="POTATO_INHIBITOR"/>
    <property type="match status" value="1"/>
</dbReference>
<keyword id="KW-0646">Protease inhibitor</keyword>
<keyword id="KW-1185">Reference proteome</keyword>
<keyword id="KW-0964">Secreted</keyword>
<keyword id="KW-0722">Serine protease inhibitor</keyword>
<keyword id="KW-0732">Signal</keyword>
<gene>
    <name type="primary">PIIF</name>
</gene>